<keyword id="KW-0067">ATP-binding</keyword>
<keyword id="KW-0963">Cytoplasm</keyword>
<keyword id="KW-0275">Fatty acid biosynthesis</keyword>
<keyword id="KW-0276">Fatty acid metabolism</keyword>
<keyword id="KW-0444">Lipid biosynthesis</keyword>
<keyword id="KW-0443">Lipid metabolism</keyword>
<keyword id="KW-0547">Nucleotide-binding</keyword>
<keyword id="KW-1185">Reference proteome</keyword>
<keyword id="KW-0808">Transferase</keyword>
<gene>
    <name evidence="1" type="primary">accA</name>
    <name type="ordered locus">Abu_2055</name>
</gene>
<comment type="function">
    <text evidence="1">Component of the acetyl coenzyme A carboxylase (ACC) complex. First, biotin carboxylase catalyzes the carboxylation of biotin on its carrier protein (BCCP) and then the CO(2) group is transferred by the carboxyltransferase to acetyl-CoA to form malonyl-CoA.</text>
</comment>
<comment type="catalytic activity">
    <reaction evidence="1">
        <text>N(6)-carboxybiotinyl-L-lysyl-[protein] + acetyl-CoA = N(6)-biotinyl-L-lysyl-[protein] + malonyl-CoA</text>
        <dbReference type="Rhea" id="RHEA:54728"/>
        <dbReference type="Rhea" id="RHEA-COMP:10505"/>
        <dbReference type="Rhea" id="RHEA-COMP:10506"/>
        <dbReference type="ChEBI" id="CHEBI:57288"/>
        <dbReference type="ChEBI" id="CHEBI:57384"/>
        <dbReference type="ChEBI" id="CHEBI:83144"/>
        <dbReference type="ChEBI" id="CHEBI:83145"/>
        <dbReference type="EC" id="2.1.3.15"/>
    </reaction>
</comment>
<comment type="pathway">
    <text evidence="1">Lipid metabolism; malonyl-CoA biosynthesis; malonyl-CoA from acetyl-CoA: step 1/1.</text>
</comment>
<comment type="subunit">
    <text evidence="1">Acetyl-CoA carboxylase is a heterohexamer composed of biotin carboxyl carrier protein (AccB), biotin carboxylase (AccC) and two subunits each of ACCase subunit alpha (AccA) and ACCase subunit beta (AccD).</text>
</comment>
<comment type="subcellular location">
    <subcellularLocation>
        <location evidence="1">Cytoplasm</location>
    </subcellularLocation>
</comment>
<comment type="similarity">
    <text evidence="1">Belongs to the AccA family.</text>
</comment>
<reference key="1">
    <citation type="journal article" date="2007" name="PLoS ONE">
        <title>The complete genome sequence and analysis of the Epsilonproteobacterium Arcobacter butzleri.</title>
        <authorList>
            <person name="Miller W.G."/>
            <person name="Parker C.T."/>
            <person name="Rubenfield M."/>
            <person name="Mendz G.L."/>
            <person name="Woesten M.M.S.M."/>
            <person name="Ussery D.W."/>
            <person name="Stolz J.F."/>
            <person name="Binnewies T.T."/>
            <person name="Hallin P.F."/>
            <person name="Wang G."/>
            <person name="Malek J.A."/>
            <person name="Rogosin A."/>
            <person name="Stanker L.H."/>
            <person name="Mandrell R.E."/>
        </authorList>
    </citation>
    <scope>NUCLEOTIDE SEQUENCE [LARGE SCALE GENOMIC DNA]</scope>
    <source>
        <strain>RM4018</strain>
    </source>
</reference>
<feature type="chain" id="PRO_1000062575" description="Acetyl-coenzyme A carboxylase carboxyl transferase subunit alpha">
    <location>
        <begin position="1"/>
        <end position="311"/>
    </location>
</feature>
<feature type="domain" description="CoA carboxyltransferase C-terminal" evidence="2">
    <location>
        <begin position="36"/>
        <end position="286"/>
    </location>
</feature>
<accession>A8EWE9</accession>
<sequence>MATYLEFEEKIKKIEEDIIVAKTKADEPAVDILEKKLEKEVEKTFKNLNDYQKLQLARHPDRPYALDYISGLLKNAYEVHGDRHYVDDHAIVCYFGFIDNQKVLVIGEQKGRGTKEKLQRNFGMPSPEGYRKALRAAKMADKFQIPILMLVDTPGAYPGIGAEERNQSEAIAKNLFEFADLTTPTISVVIGEGGSGGALAISVADKLAMMRYSVYAVISPEGCSAILWNDPTKVETAANALKITAENLKELNLIDDVINEPLIGAHRQKEQAIFALKEYFIKSLAELKKLTPQERLDKKYQKLMNLGSFTK</sequence>
<proteinExistence type="inferred from homology"/>
<organism>
    <name type="scientific">Aliarcobacter butzleri (strain RM4018)</name>
    <name type="common">Arcobacter butzleri</name>
    <dbReference type="NCBI Taxonomy" id="367737"/>
    <lineage>
        <taxon>Bacteria</taxon>
        <taxon>Pseudomonadati</taxon>
        <taxon>Campylobacterota</taxon>
        <taxon>Epsilonproteobacteria</taxon>
        <taxon>Campylobacterales</taxon>
        <taxon>Arcobacteraceae</taxon>
        <taxon>Aliarcobacter</taxon>
    </lineage>
</organism>
<protein>
    <recommendedName>
        <fullName evidence="1">Acetyl-coenzyme A carboxylase carboxyl transferase subunit alpha</fullName>
        <shortName evidence="1">ACCase subunit alpha</shortName>
        <shortName evidence="1">Acetyl-CoA carboxylase carboxyltransferase subunit alpha</shortName>
        <ecNumber evidence="1">2.1.3.15</ecNumber>
    </recommendedName>
</protein>
<evidence type="ECO:0000255" key="1">
    <source>
        <dbReference type="HAMAP-Rule" id="MF_00823"/>
    </source>
</evidence>
<evidence type="ECO:0000255" key="2">
    <source>
        <dbReference type="PROSITE-ProRule" id="PRU01137"/>
    </source>
</evidence>
<name>ACCA_ALIB4</name>
<dbReference type="EC" id="2.1.3.15" evidence="1"/>
<dbReference type="EMBL" id="CP000361">
    <property type="protein sequence ID" value="ABV68272.1"/>
    <property type="molecule type" value="Genomic_DNA"/>
</dbReference>
<dbReference type="RefSeq" id="WP_012147937.1">
    <property type="nucleotide sequence ID" value="NC_009850.1"/>
</dbReference>
<dbReference type="SMR" id="A8EWE9"/>
<dbReference type="STRING" id="367737.Abu_2055"/>
<dbReference type="GeneID" id="24303821"/>
<dbReference type="KEGG" id="abu:Abu_2055"/>
<dbReference type="eggNOG" id="COG0825">
    <property type="taxonomic scope" value="Bacteria"/>
</dbReference>
<dbReference type="HOGENOM" id="CLU_015486_0_2_7"/>
<dbReference type="UniPathway" id="UPA00655">
    <property type="reaction ID" value="UER00711"/>
</dbReference>
<dbReference type="Proteomes" id="UP000001136">
    <property type="component" value="Chromosome"/>
</dbReference>
<dbReference type="GO" id="GO:0009317">
    <property type="term" value="C:acetyl-CoA carboxylase complex"/>
    <property type="evidence" value="ECO:0007669"/>
    <property type="project" value="InterPro"/>
</dbReference>
<dbReference type="GO" id="GO:0003989">
    <property type="term" value="F:acetyl-CoA carboxylase activity"/>
    <property type="evidence" value="ECO:0007669"/>
    <property type="project" value="InterPro"/>
</dbReference>
<dbReference type="GO" id="GO:0005524">
    <property type="term" value="F:ATP binding"/>
    <property type="evidence" value="ECO:0007669"/>
    <property type="project" value="UniProtKB-KW"/>
</dbReference>
<dbReference type="GO" id="GO:0016743">
    <property type="term" value="F:carboxyl- or carbamoyltransferase activity"/>
    <property type="evidence" value="ECO:0007669"/>
    <property type="project" value="UniProtKB-UniRule"/>
</dbReference>
<dbReference type="GO" id="GO:0006633">
    <property type="term" value="P:fatty acid biosynthetic process"/>
    <property type="evidence" value="ECO:0007669"/>
    <property type="project" value="UniProtKB-KW"/>
</dbReference>
<dbReference type="GO" id="GO:2001295">
    <property type="term" value="P:malonyl-CoA biosynthetic process"/>
    <property type="evidence" value="ECO:0007669"/>
    <property type="project" value="UniProtKB-UniRule"/>
</dbReference>
<dbReference type="Gene3D" id="3.90.226.10">
    <property type="entry name" value="2-enoyl-CoA Hydratase, Chain A, domain 1"/>
    <property type="match status" value="1"/>
</dbReference>
<dbReference type="HAMAP" id="MF_00823">
    <property type="entry name" value="AcetylCoA_CT_alpha"/>
    <property type="match status" value="1"/>
</dbReference>
<dbReference type="InterPro" id="IPR001095">
    <property type="entry name" value="Acetyl_CoA_COase_a_su"/>
</dbReference>
<dbReference type="InterPro" id="IPR029045">
    <property type="entry name" value="ClpP/crotonase-like_dom_sf"/>
</dbReference>
<dbReference type="InterPro" id="IPR011763">
    <property type="entry name" value="COA_CT_C"/>
</dbReference>
<dbReference type="NCBIfam" id="TIGR00513">
    <property type="entry name" value="accA"/>
    <property type="match status" value="1"/>
</dbReference>
<dbReference type="NCBIfam" id="NF041504">
    <property type="entry name" value="AccA_sub"/>
    <property type="match status" value="1"/>
</dbReference>
<dbReference type="NCBIfam" id="NF004344">
    <property type="entry name" value="PRK05724.1"/>
    <property type="match status" value="1"/>
</dbReference>
<dbReference type="PANTHER" id="PTHR42853">
    <property type="entry name" value="ACETYL-COENZYME A CARBOXYLASE CARBOXYL TRANSFERASE SUBUNIT ALPHA"/>
    <property type="match status" value="1"/>
</dbReference>
<dbReference type="PANTHER" id="PTHR42853:SF3">
    <property type="entry name" value="ACETYL-COENZYME A CARBOXYLASE CARBOXYL TRANSFERASE SUBUNIT ALPHA, CHLOROPLASTIC"/>
    <property type="match status" value="1"/>
</dbReference>
<dbReference type="Pfam" id="PF03255">
    <property type="entry name" value="ACCA"/>
    <property type="match status" value="1"/>
</dbReference>
<dbReference type="PRINTS" id="PR01069">
    <property type="entry name" value="ACCCTRFRASEA"/>
</dbReference>
<dbReference type="SUPFAM" id="SSF52096">
    <property type="entry name" value="ClpP/crotonase"/>
    <property type="match status" value="1"/>
</dbReference>
<dbReference type="PROSITE" id="PS50989">
    <property type="entry name" value="COA_CT_CTER"/>
    <property type="match status" value="1"/>
</dbReference>